<organism>
    <name type="scientific">Fischerella muscicola</name>
    <dbReference type="NCBI Taxonomy" id="92938"/>
    <lineage>
        <taxon>Bacteria</taxon>
        <taxon>Bacillati</taxon>
        <taxon>Cyanobacteriota</taxon>
        <taxon>Cyanophyceae</taxon>
        <taxon>Nostocales</taxon>
        <taxon>Hapalosiphonaceae</taxon>
        <taxon>Fischerella</taxon>
    </lineage>
</organism>
<feature type="chain" id="PRO_0000077557" description="Iron stress-induced chlorophyll-binding protein">
    <location>
        <begin position="1"/>
        <end position="345"/>
    </location>
</feature>
<feature type="transmembrane region" description="Helical" evidence="2">
    <location>
        <begin position="25"/>
        <end position="45"/>
    </location>
</feature>
<feature type="transmembrane region" description="Helical" evidence="2">
    <location>
        <begin position="64"/>
        <end position="84"/>
    </location>
</feature>
<feature type="transmembrane region" description="Helical" evidence="2">
    <location>
        <begin position="89"/>
        <end position="109"/>
    </location>
</feature>
<feature type="transmembrane region" description="Helical" evidence="2">
    <location>
        <begin position="203"/>
        <end position="223"/>
    </location>
</feature>
<feature type="transmembrane region" description="Helical" evidence="2">
    <location>
        <begin position="240"/>
        <end position="260"/>
    </location>
</feature>
<feature type="transmembrane region" description="Helical" evidence="2">
    <location>
        <begin position="309"/>
        <end position="329"/>
    </location>
</feature>
<name>ISIA_FISMU</name>
<dbReference type="EMBL" id="AJ295840">
    <property type="protein sequence ID" value="CAC08491.1"/>
    <property type="molecule type" value="Genomic_DNA"/>
</dbReference>
<dbReference type="SMR" id="Q9F488"/>
<dbReference type="GO" id="GO:0009522">
    <property type="term" value="C:photosystem I"/>
    <property type="evidence" value="ECO:0007669"/>
    <property type="project" value="UniProtKB-KW"/>
</dbReference>
<dbReference type="GO" id="GO:0031676">
    <property type="term" value="C:plasma membrane-derived thylakoid membrane"/>
    <property type="evidence" value="ECO:0007669"/>
    <property type="project" value="UniProtKB-SubCell"/>
</dbReference>
<dbReference type="GO" id="GO:0016168">
    <property type="term" value="F:chlorophyll binding"/>
    <property type="evidence" value="ECO:0007669"/>
    <property type="project" value="UniProtKB-KW"/>
</dbReference>
<dbReference type="GO" id="GO:0009767">
    <property type="term" value="P:photosynthetic electron transport chain"/>
    <property type="evidence" value="ECO:0007669"/>
    <property type="project" value="InterPro"/>
</dbReference>
<dbReference type="InterPro" id="IPR000932">
    <property type="entry name" value="PS_antenna-like"/>
</dbReference>
<dbReference type="InterPro" id="IPR036001">
    <property type="entry name" value="PS_II_antenna-like_sf"/>
</dbReference>
<dbReference type="NCBIfam" id="TIGR03041">
    <property type="entry name" value="PS_antenn_a_b"/>
    <property type="match status" value="1"/>
</dbReference>
<dbReference type="Pfam" id="PF00421">
    <property type="entry name" value="PSII"/>
    <property type="match status" value="1"/>
</dbReference>
<dbReference type="SUPFAM" id="SSF161077">
    <property type="entry name" value="Photosystem II antenna protein-like"/>
    <property type="match status" value="1"/>
</dbReference>
<keyword id="KW-0148">Chlorophyll</keyword>
<keyword id="KW-0157">Chromophore</keyword>
<keyword id="KW-0472">Membrane</keyword>
<keyword id="KW-0602">Photosynthesis</keyword>
<keyword id="KW-0603">Photosystem I</keyword>
<keyword id="KW-0346">Stress response</keyword>
<keyword id="KW-0793">Thylakoid</keyword>
<keyword id="KW-0812">Transmembrane</keyword>
<keyword id="KW-1133">Transmembrane helix</keyword>
<reference key="1">
    <citation type="journal article" date="2001" name="FEMS Microbiol. Lett.">
        <title>The iron-regulated isiA gene of Fischerella muscicola strain PCC 73103 is linked to a likewise regulated gene encoding a Pcb-like chlorophyll-binding protein.</title>
        <authorList>
            <person name="Geiss U."/>
            <person name="Vinnemeier J."/>
            <person name="Schoor A."/>
            <person name="Hagemann M."/>
        </authorList>
    </citation>
    <scope>NUCLEOTIDE SEQUENCE [GENOMIC DNA]</scope>
    <scope>INDUCTION</scope>
    <source>
        <strain>ATCC 29114 / PCC 73103 / SAG 1427-1 / UTEX 1301</strain>
    </source>
</reference>
<comment type="function">
    <text evidence="1">Functions as an antenna for photosystem I (PSI) under iron-limiting conditions, when phycobilisomes disappear. In the (PSI)3(Isi3)18 complex most of the harvested energy is probably used by PSI; in other PSI-containing supercomplexes a large part of the energy will probably not be used for light harvesting, but rather is dissipated to protect the organism from light damage.</text>
</comment>
<comment type="cofactor">
    <cofactor evidence="1">
        <name>chlorophyll a</name>
        <dbReference type="ChEBI" id="CHEBI:58416"/>
    </cofactor>
    <text evidence="1">Chlorophyll a.</text>
</comment>
<comment type="cofactor">
    <cofactor evidence="1">
        <name>all-trans-beta-carotene</name>
        <dbReference type="ChEBI" id="CHEBI:17579"/>
    </cofactor>
</comment>
<comment type="subunit">
    <text evidence="1">Under iron-starvation forms a complex with PSI trimers, where the trimer is surrounded by a ring composed of 18 IsiA subunits.</text>
</comment>
<comment type="subcellular location">
    <subcellularLocation>
        <location evidence="1">Cellular thylakoid membrane</location>
        <topology evidence="4">Multi-pass membrane protein</topology>
    </subcellularLocation>
</comment>
<comment type="induction">
    <text evidence="3">By iron-starvation; however compared to Synechococcus PCC 7942 and Synechocystis PCC 6803 induction is very slow.</text>
</comment>
<comment type="similarity">
    <text evidence="4">Belongs to the PsbB/PsbC family. IsiA/Pcb subfamily.</text>
</comment>
<sequence length="345" mass="38000">MQTYDNPKVKYDWWAGNARFANLSGLFIGAHVAQAALTTLWAGAFTWFELSRYQSGVPMGEQGLILLPHLATLGFGVGAGGQIVDTYPYFVIGALHIISSAVLGAGALLHTFKGPENLKDATGPAREFHFEWDDANKLGLILGHHLLFLGAGALLLVAKAMFWGGLYDTTIHDVRVVTEPTLNPFIIFGYQTHFASVDNLEDVVGGHIYVGLLLIFGGVWHILVKPLAWAKKLLIFSGEAILSYSLGGIALAGFVAAYFCAVNTLAYPVEFYGPPLEVKFWYLRPYFADTIQLPYGNYTSRAWLANTHFFLAFFFLQGHLWHALRAIGFDFKRVEKALSAVETSS</sequence>
<accession>Q9F488</accession>
<evidence type="ECO:0000250" key="1">
    <source>
        <dbReference type="UniProtKB" id="Q55274"/>
    </source>
</evidence>
<evidence type="ECO:0000255" key="2"/>
<evidence type="ECO:0000269" key="3">
    <source>
    </source>
</evidence>
<evidence type="ECO:0000305" key="4"/>
<protein>
    <recommendedName>
        <fullName>Iron stress-induced chlorophyll-binding protein</fullName>
    </recommendedName>
    <alternativeName>
        <fullName>CP43'</fullName>
    </alternativeName>
</protein>
<gene>
    <name type="primary">isiA</name>
</gene>
<proteinExistence type="evidence at transcript level"/>